<accession>Q3B533</accession>
<protein>
    <recommendedName>
        <fullName evidence="1">N-(5'-phosphoribosyl)anthranilate isomerase</fullName>
        <shortName evidence="1">PRAI</shortName>
        <ecNumber evidence="1">5.3.1.24</ecNumber>
    </recommendedName>
</protein>
<dbReference type="EC" id="5.3.1.24" evidence="1"/>
<dbReference type="EMBL" id="CP000096">
    <property type="protein sequence ID" value="ABB23548.1"/>
    <property type="molecule type" value="Genomic_DNA"/>
</dbReference>
<dbReference type="RefSeq" id="WP_011357423.1">
    <property type="nucleotide sequence ID" value="NC_007512.1"/>
</dbReference>
<dbReference type="SMR" id="Q3B533"/>
<dbReference type="STRING" id="319225.Plut_0670"/>
<dbReference type="KEGG" id="plt:Plut_0670"/>
<dbReference type="eggNOG" id="COG0135">
    <property type="taxonomic scope" value="Bacteria"/>
</dbReference>
<dbReference type="HOGENOM" id="CLU_076364_2_0_10"/>
<dbReference type="OrthoDB" id="9786954at2"/>
<dbReference type="UniPathway" id="UPA00035">
    <property type="reaction ID" value="UER00042"/>
</dbReference>
<dbReference type="Proteomes" id="UP000002709">
    <property type="component" value="Chromosome"/>
</dbReference>
<dbReference type="GO" id="GO:0004640">
    <property type="term" value="F:phosphoribosylanthranilate isomerase activity"/>
    <property type="evidence" value="ECO:0007669"/>
    <property type="project" value="UniProtKB-UniRule"/>
</dbReference>
<dbReference type="GO" id="GO:0000162">
    <property type="term" value="P:L-tryptophan biosynthetic process"/>
    <property type="evidence" value="ECO:0007669"/>
    <property type="project" value="UniProtKB-UniRule"/>
</dbReference>
<dbReference type="CDD" id="cd00405">
    <property type="entry name" value="PRAI"/>
    <property type="match status" value="1"/>
</dbReference>
<dbReference type="Gene3D" id="3.20.20.70">
    <property type="entry name" value="Aldolase class I"/>
    <property type="match status" value="1"/>
</dbReference>
<dbReference type="HAMAP" id="MF_00135">
    <property type="entry name" value="PRAI"/>
    <property type="match status" value="1"/>
</dbReference>
<dbReference type="InterPro" id="IPR013785">
    <property type="entry name" value="Aldolase_TIM"/>
</dbReference>
<dbReference type="InterPro" id="IPR001240">
    <property type="entry name" value="PRAI_dom"/>
</dbReference>
<dbReference type="InterPro" id="IPR011060">
    <property type="entry name" value="RibuloseP-bd_barrel"/>
</dbReference>
<dbReference type="InterPro" id="IPR044643">
    <property type="entry name" value="TrpF_fam"/>
</dbReference>
<dbReference type="PANTHER" id="PTHR42894">
    <property type="entry name" value="N-(5'-PHOSPHORIBOSYL)ANTHRANILATE ISOMERASE"/>
    <property type="match status" value="1"/>
</dbReference>
<dbReference type="PANTHER" id="PTHR42894:SF1">
    <property type="entry name" value="N-(5'-PHOSPHORIBOSYL)ANTHRANILATE ISOMERASE"/>
    <property type="match status" value="1"/>
</dbReference>
<dbReference type="Pfam" id="PF00697">
    <property type="entry name" value="PRAI"/>
    <property type="match status" value="1"/>
</dbReference>
<dbReference type="SUPFAM" id="SSF51366">
    <property type="entry name" value="Ribulose-phoshate binding barrel"/>
    <property type="match status" value="1"/>
</dbReference>
<proteinExistence type="inferred from homology"/>
<feature type="chain" id="PRO_1000018618" description="N-(5'-phosphoribosyl)anthranilate isomerase">
    <location>
        <begin position="1"/>
        <end position="217"/>
    </location>
</feature>
<keyword id="KW-0028">Amino-acid biosynthesis</keyword>
<keyword id="KW-0057">Aromatic amino acid biosynthesis</keyword>
<keyword id="KW-0413">Isomerase</keyword>
<keyword id="KW-1185">Reference proteome</keyword>
<keyword id="KW-0822">Tryptophan biosynthesis</keyword>
<gene>
    <name evidence="1" type="primary">trpF</name>
    <name type="ordered locus">Plut_0670</name>
</gene>
<comment type="catalytic activity">
    <reaction evidence="1">
        <text>N-(5-phospho-beta-D-ribosyl)anthranilate = 1-(2-carboxyphenylamino)-1-deoxy-D-ribulose 5-phosphate</text>
        <dbReference type="Rhea" id="RHEA:21540"/>
        <dbReference type="ChEBI" id="CHEBI:18277"/>
        <dbReference type="ChEBI" id="CHEBI:58613"/>
        <dbReference type="EC" id="5.3.1.24"/>
    </reaction>
</comment>
<comment type="pathway">
    <text evidence="1">Amino-acid biosynthesis; L-tryptophan biosynthesis; L-tryptophan from chorismate: step 3/5.</text>
</comment>
<comment type="similarity">
    <text evidence="1">Belongs to the TrpF family.</text>
</comment>
<organism>
    <name type="scientific">Chlorobium luteolum (strain DSM 273 / BCRC 81028 / 2530)</name>
    <name type="common">Pelodictyon luteolum</name>
    <dbReference type="NCBI Taxonomy" id="319225"/>
    <lineage>
        <taxon>Bacteria</taxon>
        <taxon>Pseudomonadati</taxon>
        <taxon>Chlorobiota</taxon>
        <taxon>Chlorobiia</taxon>
        <taxon>Chlorobiales</taxon>
        <taxon>Chlorobiaceae</taxon>
        <taxon>Chlorobium/Pelodictyon group</taxon>
        <taxon>Pelodictyon</taxon>
    </lineage>
</organism>
<evidence type="ECO:0000255" key="1">
    <source>
        <dbReference type="HAMAP-Rule" id="MF_00135"/>
    </source>
</evidence>
<sequence length="217" mass="23501">MTRIKICGITRMEDARAAALFGADALGFNFSPESPRCVTKDAARTMVCALPPFIEGVGVFVEQDPREIIEICRYCGLSVAQLHGSRYSEEETKLVLEGVRVLKVFRPETDFTPAAVLRFREATGVSAFLFDTYRPGMEGGTGEQMEGSLAERIFSGLPEGCYGVLAGGLNPGNVREAVQSLRPYALDTASGVEESPGIKSHEKMQAFVQAVRAAGER</sequence>
<name>TRPF_CHLL3</name>
<reference key="1">
    <citation type="submission" date="2005-08" db="EMBL/GenBank/DDBJ databases">
        <title>Complete sequence of Pelodictyon luteolum DSM 273.</title>
        <authorList>
            <consortium name="US DOE Joint Genome Institute"/>
            <person name="Copeland A."/>
            <person name="Lucas S."/>
            <person name="Lapidus A."/>
            <person name="Barry K."/>
            <person name="Detter J.C."/>
            <person name="Glavina T."/>
            <person name="Hammon N."/>
            <person name="Israni S."/>
            <person name="Pitluck S."/>
            <person name="Bryant D."/>
            <person name="Schmutz J."/>
            <person name="Larimer F."/>
            <person name="Land M."/>
            <person name="Kyrpides N."/>
            <person name="Ivanova N."/>
            <person name="Richardson P."/>
        </authorList>
    </citation>
    <scope>NUCLEOTIDE SEQUENCE [LARGE SCALE GENOMIC DNA]</scope>
    <source>
        <strain>DSM 273 / BCRC 81028 / 2530</strain>
    </source>
</reference>